<proteinExistence type="predicted"/>
<organism>
    <name type="scientific">Streptomyces coelicolor (strain ATCC BAA-471 / A3(2) / M145)</name>
    <dbReference type="NCBI Taxonomy" id="100226"/>
    <lineage>
        <taxon>Bacteria</taxon>
        <taxon>Bacillati</taxon>
        <taxon>Actinomycetota</taxon>
        <taxon>Actinomycetes</taxon>
        <taxon>Kitasatosporales</taxon>
        <taxon>Streptomycetaceae</taxon>
        <taxon>Streptomyces</taxon>
        <taxon>Streptomyces albidoflavus group</taxon>
    </lineage>
</organism>
<protein>
    <recommendedName>
        <fullName>Actinorhodin polyketide synthase bifunctional cyclase/dehydratase</fullName>
    </recommendedName>
    <alternativeName>
        <fullName>ACTVII</fullName>
    </alternativeName>
    <alternativeName>
        <fullName>actI ORF4</fullName>
    </alternativeName>
</protein>
<dbReference type="EMBL" id="X63449">
    <property type="protein sequence ID" value="CAA45046.1"/>
    <property type="molecule type" value="Genomic_DNA"/>
</dbReference>
<dbReference type="EMBL" id="AL939122">
    <property type="protein sequence ID" value="CAC44203.1"/>
    <property type="molecule type" value="Genomic_DNA"/>
</dbReference>
<dbReference type="PIR" id="S25843">
    <property type="entry name" value="S25843"/>
</dbReference>
<dbReference type="RefSeq" id="NP_629240.1">
    <property type="nucleotide sequence ID" value="NC_003888.3"/>
</dbReference>
<dbReference type="RefSeq" id="WP_011030049.1">
    <property type="nucleotide sequence ID" value="NZ_VNID01000008.1"/>
</dbReference>
<dbReference type="SMR" id="Q02055"/>
<dbReference type="STRING" id="100226.gene:17762739"/>
<dbReference type="PaxDb" id="100226-SCO5090"/>
<dbReference type="KEGG" id="sco:SCO5090"/>
<dbReference type="PATRIC" id="fig|100226.15.peg.5170"/>
<dbReference type="eggNOG" id="COG2867">
    <property type="taxonomic scope" value="Bacteria"/>
</dbReference>
<dbReference type="HOGENOM" id="CLU_049174_0_0_11"/>
<dbReference type="InParanoid" id="Q02055"/>
<dbReference type="OrthoDB" id="3419705at2"/>
<dbReference type="PhylomeDB" id="Q02055"/>
<dbReference type="UniPathway" id="UPA00173"/>
<dbReference type="Proteomes" id="UP000001973">
    <property type="component" value="Chromosome"/>
</dbReference>
<dbReference type="GO" id="GO:0017000">
    <property type="term" value="P:antibiotic biosynthetic process"/>
    <property type="evidence" value="ECO:0007669"/>
    <property type="project" value="UniProtKB-KW"/>
</dbReference>
<dbReference type="CDD" id="cd08861">
    <property type="entry name" value="OtcD1_ARO-CYC_like"/>
    <property type="match status" value="1"/>
</dbReference>
<dbReference type="Gene3D" id="3.30.530.20">
    <property type="match status" value="2"/>
</dbReference>
<dbReference type="InterPro" id="IPR005031">
    <property type="entry name" value="COQ10_START"/>
</dbReference>
<dbReference type="InterPro" id="IPR023393">
    <property type="entry name" value="START-like_dom_sf"/>
</dbReference>
<dbReference type="Pfam" id="PF03364">
    <property type="entry name" value="Polyketide_cyc"/>
    <property type="match status" value="1"/>
</dbReference>
<dbReference type="SUPFAM" id="SSF55961">
    <property type="entry name" value="Bet v1-like"/>
    <property type="match status" value="2"/>
</dbReference>
<name>CYPK_STRCO</name>
<accession>Q02055</accession>
<gene>
    <name type="ordered locus">SCO5090</name>
    <name type="ORF">SCBAC28G1.16</name>
</gene>
<comment type="function">
    <text>Is needed for correct cyclization of the oligoketide leading to isochromanequinone formation.</text>
</comment>
<comment type="pathway">
    <text>Antibiotic biosynthesis; actinorhodin biosynthesis.</text>
</comment>
<feature type="chain" id="PRO_0000079760" description="Actinorhodin polyketide synthase bifunctional cyclase/dehydratase">
    <location>
        <begin position="1"/>
        <end position="316"/>
    </location>
</feature>
<reference key="1">
    <citation type="journal article" date="1992" name="J. Biol. Chem.">
        <title>Nucleotide sequence and deduced functions of a set of cotranscribed genes of Streptomyces coelicolor A3(2) including the polyketide synthase for the antibiotic actinorhodin.</title>
        <authorList>
            <person name="Fernandez-Moreno M.A."/>
            <person name="Martinez E."/>
            <person name="Boto L."/>
            <person name="Hopwood D.A."/>
            <person name="Malpartida F."/>
        </authorList>
    </citation>
    <scope>NUCLEOTIDE SEQUENCE [GENOMIC DNA]</scope>
    <source>
        <strain>ATCC BAA-471 / A3(2) / M145</strain>
    </source>
</reference>
<reference key="2">
    <citation type="journal article" date="2002" name="Nature">
        <title>Complete genome sequence of the model actinomycete Streptomyces coelicolor A3(2).</title>
        <authorList>
            <person name="Bentley S.D."/>
            <person name="Chater K.F."/>
            <person name="Cerdeno-Tarraga A.-M."/>
            <person name="Challis G.L."/>
            <person name="Thomson N.R."/>
            <person name="James K.D."/>
            <person name="Harris D.E."/>
            <person name="Quail M.A."/>
            <person name="Kieser H."/>
            <person name="Harper D."/>
            <person name="Bateman A."/>
            <person name="Brown S."/>
            <person name="Chandra G."/>
            <person name="Chen C.W."/>
            <person name="Collins M."/>
            <person name="Cronin A."/>
            <person name="Fraser A."/>
            <person name="Goble A."/>
            <person name="Hidalgo J."/>
            <person name="Hornsby T."/>
            <person name="Howarth S."/>
            <person name="Huang C.-H."/>
            <person name="Kieser T."/>
            <person name="Larke L."/>
            <person name="Murphy L.D."/>
            <person name="Oliver K."/>
            <person name="O'Neil S."/>
            <person name="Rabbinowitsch E."/>
            <person name="Rajandream M.A."/>
            <person name="Rutherford K.M."/>
            <person name="Rutter S."/>
            <person name="Seeger K."/>
            <person name="Saunders D."/>
            <person name="Sharp S."/>
            <person name="Squares R."/>
            <person name="Squares S."/>
            <person name="Taylor K."/>
            <person name="Warren T."/>
            <person name="Wietzorrek A."/>
            <person name="Woodward J.R."/>
            <person name="Barrell B.G."/>
            <person name="Parkhill J."/>
            <person name="Hopwood D.A."/>
        </authorList>
    </citation>
    <scope>NUCLEOTIDE SEQUENCE [LARGE SCALE GENOMIC DNA]</scope>
    <source>
        <strain>ATCC BAA-471 / A3(2) / M145</strain>
    </source>
</reference>
<keyword id="KW-0045">Antibiotic biosynthesis</keyword>
<keyword id="KW-1185">Reference proteome</keyword>
<sequence>MSRPGEHRVVHTLRTQAPARRLYELVARVEDWPAVFEPTVHVQVLERGPGTERFRIWARVGGRVKTWTSRRTLDPDTLRVTFRQELTQPPIASMGGSWEFRGDGDGTEVVLTHDFAAVDEAALPGLREALDANSGKELAALVALAERRQPPEELVFTFEDTLRVPSGDDAYAFIERSDLWQERLPHVRKVTLTEEAAGTGPAETRDMTVQDMTMETVTTDGGTHTTRSIRLCVPARSIVYKQLVPPALLSGHCGAWTFGEDTVTARHTVAIDPARVEEVLGKGATVADARTHLREVLGANSRATLRHAAAAAGPAS</sequence>